<name>PROF4_HEVBR</name>
<comment type="function">
    <text evidence="1">Binds to actin and affects the structure of the cytoskeleton. At high concentrations, profilin prevents the polymerization of actin, whereas it enhances it at low concentrations. By binding to PIP2, it inhibits the formation of IP3 and DG (By similarity).</text>
</comment>
<comment type="subunit">
    <text>Occurs in many kinds of cells as a complex with monomeric actin in a 1:1 ratio.</text>
</comment>
<comment type="subcellular location">
    <subcellularLocation>
        <location evidence="1">Cytoplasm</location>
        <location evidence="1">Cytoskeleton</location>
    </subcellularLocation>
</comment>
<comment type="allergen">
    <text>Causes an allergic reaction in human. Involved in latex allergic reactions.</text>
</comment>
<comment type="similarity">
    <text evidence="2">Belongs to the profilin family.</text>
</comment>
<evidence type="ECO:0000250" key="1"/>
<evidence type="ECO:0000305" key="2"/>
<dbReference type="EMBL" id="AF119366">
    <property type="protein sequence ID" value="AAF34342.1"/>
    <property type="molecule type" value="mRNA"/>
</dbReference>
<dbReference type="SMR" id="Q9M7M9"/>
<dbReference type="Allergome" id="397">
    <property type="allergen name" value="Hev b 8"/>
</dbReference>
<dbReference type="Allergome" id="401">
    <property type="allergen name" value="Hev b 8.0202"/>
</dbReference>
<dbReference type="GO" id="GO:0005938">
    <property type="term" value="C:cell cortex"/>
    <property type="evidence" value="ECO:0007669"/>
    <property type="project" value="TreeGrafter"/>
</dbReference>
<dbReference type="GO" id="GO:0005856">
    <property type="term" value="C:cytoskeleton"/>
    <property type="evidence" value="ECO:0007669"/>
    <property type="project" value="UniProtKB-SubCell"/>
</dbReference>
<dbReference type="GO" id="GO:0003785">
    <property type="term" value="F:actin monomer binding"/>
    <property type="evidence" value="ECO:0007669"/>
    <property type="project" value="TreeGrafter"/>
</dbReference>
<dbReference type="CDD" id="cd00148">
    <property type="entry name" value="PROF"/>
    <property type="match status" value="1"/>
</dbReference>
<dbReference type="FunFam" id="3.30.450.30:FF:000001">
    <property type="entry name" value="Profilin"/>
    <property type="match status" value="1"/>
</dbReference>
<dbReference type="Gene3D" id="3.30.450.30">
    <property type="entry name" value="Dynein light chain 2a, cytoplasmic"/>
    <property type="match status" value="1"/>
</dbReference>
<dbReference type="InterPro" id="IPR048278">
    <property type="entry name" value="PFN"/>
</dbReference>
<dbReference type="InterPro" id="IPR005455">
    <property type="entry name" value="PFN_euk"/>
</dbReference>
<dbReference type="InterPro" id="IPR036140">
    <property type="entry name" value="PFN_sf"/>
</dbReference>
<dbReference type="InterPro" id="IPR027310">
    <property type="entry name" value="Profilin_CS"/>
</dbReference>
<dbReference type="PANTHER" id="PTHR11604">
    <property type="entry name" value="PROFILIN"/>
    <property type="match status" value="1"/>
</dbReference>
<dbReference type="PANTHER" id="PTHR11604:SF35">
    <property type="entry name" value="PROFILIN-3"/>
    <property type="match status" value="1"/>
</dbReference>
<dbReference type="Pfam" id="PF00235">
    <property type="entry name" value="Profilin"/>
    <property type="match status" value="1"/>
</dbReference>
<dbReference type="PRINTS" id="PR00392">
    <property type="entry name" value="PROFILIN"/>
</dbReference>
<dbReference type="PRINTS" id="PR01640">
    <property type="entry name" value="PROFILINPLNT"/>
</dbReference>
<dbReference type="SMART" id="SM00392">
    <property type="entry name" value="PROF"/>
    <property type="match status" value="1"/>
</dbReference>
<dbReference type="SUPFAM" id="SSF55770">
    <property type="entry name" value="Profilin (actin-binding protein)"/>
    <property type="match status" value="1"/>
</dbReference>
<dbReference type="PROSITE" id="PS00414">
    <property type="entry name" value="PROFILIN"/>
    <property type="match status" value="1"/>
</dbReference>
<protein>
    <recommendedName>
        <fullName>Profilin-4</fullName>
    </recommendedName>
    <alternativeName>
        <fullName>Pollen allergen Hev b 8.0202</fullName>
    </alternativeName>
    <allergenName>Hev b 8.0202</allergenName>
</protein>
<reference key="1">
    <citation type="submission" date="1999-01" db="EMBL/GenBank/DDBJ databases">
        <title>Characterization of new isoforms of the latex allergen, Hev b 8.</title>
        <authorList>
            <person name="Beezhold D.H."/>
            <person name="Hickey V.L."/>
            <person name="Kostyal D.A."/>
            <person name="Sussman G.L."/>
        </authorList>
    </citation>
    <scope>NUCLEOTIDE SEQUENCE [MRNA]</scope>
</reference>
<keyword id="KW-0009">Actin-binding</keyword>
<keyword id="KW-0020">Allergen</keyword>
<keyword id="KW-0963">Cytoplasm</keyword>
<keyword id="KW-0206">Cytoskeleton</keyword>
<organism>
    <name type="scientific">Hevea brasiliensis</name>
    <name type="common">Para rubber tree</name>
    <name type="synonym">Siphonia brasiliensis</name>
    <dbReference type="NCBI Taxonomy" id="3981"/>
    <lineage>
        <taxon>Eukaryota</taxon>
        <taxon>Viridiplantae</taxon>
        <taxon>Streptophyta</taxon>
        <taxon>Embryophyta</taxon>
        <taxon>Tracheophyta</taxon>
        <taxon>Spermatophyta</taxon>
        <taxon>Magnoliopsida</taxon>
        <taxon>eudicotyledons</taxon>
        <taxon>Gunneridae</taxon>
        <taxon>Pentapetalae</taxon>
        <taxon>rosids</taxon>
        <taxon>fabids</taxon>
        <taxon>Malpighiales</taxon>
        <taxon>Euphorbiaceae</taxon>
        <taxon>Crotonoideae</taxon>
        <taxon>Micrandreae</taxon>
        <taxon>Hevea</taxon>
    </lineage>
</organism>
<feature type="initiator methionine" description="Removed" evidence="1">
    <location>
        <position position="1"/>
    </location>
</feature>
<feature type="chain" id="PRO_0000199636" description="Profilin-4">
    <location>
        <begin position="2"/>
        <end position="131"/>
    </location>
</feature>
<proteinExistence type="evidence at protein level"/>
<sequence length="131" mass="14113">MSWQTYVDDHLMCDIDGHRLTAAAIIGHDGSVWAQSSSFPQFKSDEVAAIMKDFDEPGSLAPTGLHLGSTKYMVIQGEPGAVIRGKKGSGGITVKKTSQALIIGIYDEPLTPGQCNMIVERLGDYLLEQGM</sequence>
<accession>Q9M7M9</accession>